<sequence length="231" mass="26168">MSNREVIIALDFDSLDKTCKFLNLFENQNLFVKIGMELFYQNGLQVLHEIKNRGHKIFLDLKLHDIPNTVYHAVKGLMKFDVDIITVHCAGGLTMLNQAKQAVFDQNKNTKIIGITQLTSTSETEMQTQQKISTSLQDSVLNYAKLAKEANIDGVVSSVWETKKIKEQNGNNFLVINPGIRLEKDDSGDQKRVASPLDAKNQLADFIVVGRPITKDNNPLEKYLEIKRMFV</sequence>
<name>PYRF_MALP2</name>
<comment type="function">
    <text evidence="1">Catalyzes the decarboxylation of orotidine 5'-monophosphate (OMP) to uridine 5'-monophosphate (UMP).</text>
</comment>
<comment type="catalytic activity">
    <reaction evidence="1">
        <text>orotidine 5'-phosphate + H(+) = UMP + CO2</text>
        <dbReference type="Rhea" id="RHEA:11596"/>
        <dbReference type="ChEBI" id="CHEBI:15378"/>
        <dbReference type="ChEBI" id="CHEBI:16526"/>
        <dbReference type="ChEBI" id="CHEBI:57538"/>
        <dbReference type="ChEBI" id="CHEBI:57865"/>
        <dbReference type="EC" id="4.1.1.23"/>
    </reaction>
</comment>
<comment type="pathway">
    <text evidence="1">Pyrimidine metabolism; UMP biosynthesis via de novo pathway; UMP from orotate: step 2/2.</text>
</comment>
<comment type="subunit">
    <text evidence="1">Homodimer.</text>
</comment>
<comment type="similarity">
    <text evidence="1">Belongs to the OMP decarboxylase family. Type 1 subfamily.</text>
</comment>
<accession>Q8EUY3</accession>
<proteinExistence type="inferred from homology"/>
<evidence type="ECO:0000255" key="1">
    <source>
        <dbReference type="HAMAP-Rule" id="MF_01200"/>
    </source>
</evidence>
<feature type="chain" id="PRO_0000134555" description="Orotidine 5'-phosphate decarboxylase">
    <location>
        <begin position="1"/>
        <end position="231"/>
    </location>
</feature>
<feature type="active site" description="Proton donor" evidence="1">
    <location>
        <position position="62"/>
    </location>
</feature>
<feature type="binding site" evidence="1">
    <location>
        <position position="11"/>
    </location>
    <ligand>
        <name>substrate</name>
    </ligand>
</feature>
<feature type="binding site" evidence="1">
    <location>
        <position position="33"/>
    </location>
    <ligand>
        <name>substrate</name>
    </ligand>
</feature>
<feature type="binding site" evidence="1">
    <location>
        <begin position="60"/>
        <end position="69"/>
    </location>
    <ligand>
        <name>substrate</name>
    </ligand>
</feature>
<feature type="binding site" evidence="1">
    <location>
        <position position="119"/>
    </location>
    <ligand>
        <name>substrate</name>
    </ligand>
</feature>
<feature type="binding site" evidence="1">
    <location>
        <position position="181"/>
    </location>
    <ligand>
        <name>substrate</name>
    </ligand>
</feature>
<feature type="binding site" evidence="1">
    <location>
        <position position="190"/>
    </location>
    <ligand>
        <name>substrate</name>
    </ligand>
</feature>
<feature type="binding site" evidence="1">
    <location>
        <position position="210"/>
    </location>
    <ligand>
        <name>substrate</name>
    </ligand>
</feature>
<feature type="binding site" evidence="1">
    <location>
        <position position="211"/>
    </location>
    <ligand>
        <name>substrate</name>
    </ligand>
</feature>
<organism>
    <name type="scientific">Malacoplasma penetrans (strain HF-2)</name>
    <name type="common">Mycoplasma penetrans</name>
    <dbReference type="NCBI Taxonomy" id="272633"/>
    <lineage>
        <taxon>Bacteria</taxon>
        <taxon>Bacillati</taxon>
        <taxon>Mycoplasmatota</taxon>
        <taxon>Mycoplasmoidales</taxon>
        <taxon>Mycoplasmoidaceae</taxon>
        <taxon>Malacoplasma</taxon>
    </lineage>
</organism>
<protein>
    <recommendedName>
        <fullName evidence="1">Orotidine 5'-phosphate decarboxylase</fullName>
        <ecNumber evidence="1">4.1.1.23</ecNumber>
    </recommendedName>
    <alternativeName>
        <fullName evidence="1">OMP decarboxylase</fullName>
        <shortName evidence="1">OMPDCase</shortName>
        <shortName evidence="1">OMPdecase</shortName>
    </alternativeName>
</protein>
<dbReference type="EC" id="4.1.1.23" evidence="1"/>
<dbReference type="EMBL" id="BA000026">
    <property type="protein sequence ID" value="BAC44578.1"/>
    <property type="molecule type" value="Genomic_DNA"/>
</dbReference>
<dbReference type="RefSeq" id="WP_011077607.1">
    <property type="nucleotide sequence ID" value="NC_004432.1"/>
</dbReference>
<dbReference type="SMR" id="Q8EUY3"/>
<dbReference type="FunCoup" id="Q8EUY3">
    <property type="interactions" value="78"/>
</dbReference>
<dbReference type="STRING" id="272633.gene:10731907"/>
<dbReference type="KEGG" id="mpe:MYPE7850"/>
<dbReference type="eggNOG" id="COG0284">
    <property type="taxonomic scope" value="Bacteria"/>
</dbReference>
<dbReference type="HOGENOM" id="CLU_067069_1_0_14"/>
<dbReference type="InParanoid" id="Q8EUY3"/>
<dbReference type="UniPathway" id="UPA00070">
    <property type="reaction ID" value="UER00120"/>
</dbReference>
<dbReference type="Proteomes" id="UP000002522">
    <property type="component" value="Chromosome"/>
</dbReference>
<dbReference type="GO" id="GO:0005829">
    <property type="term" value="C:cytosol"/>
    <property type="evidence" value="ECO:0007669"/>
    <property type="project" value="TreeGrafter"/>
</dbReference>
<dbReference type="GO" id="GO:0004590">
    <property type="term" value="F:orotidine-5'-phosphate decarboxylase activity"/>
    <property type="evidence" value="ECO:0007669"/>
    <property type="project" value="UniProtKB-UniRule"/>
</dbReference>
<dbReference type="GO" id="GO:0006207">
    <property type="term" value="P:'de novo' pyrimidine nucleobase biosynthetic process"/>
    <property type="evidence" value="ECO:0007669"/>
    <property type="project" value="InterPro"/>
</dbReference>
<dbReference type="GO" id="GO:0044205">
    <property type="term" value="P:'de novo' UMP biosynthetic process"/>
    <property type="evidence" value="ECO:0007669"/>
    <property type="project" value="UniProtKB-UniRule"/>
</dbReference>
<dbReference type="CDD" id="cd04725">
    <property type="entry name" value="OMP_decarboxylase_like"/>
    <property type="match status" value="1"/>
</dbReference>
<dbReference type="FunFam" id="3.20.20.70:FF:000015">
    <property type="entry name" value="Orotidine 5'-phosphate decarboxylase"/>
    <property type="match status" value="1"/>
</dbReference>
<dbReference type="Gene3D" id="3.20.20.70">
    <property type="entry name" value="Aldolase class I"/>
    <property type="match status" value="1"/>
</dbReference>
<dbReference type="HAMAP" id="MF_01200_B">
    <property type="entry name" value="OMPdecase_type1_B"/>
    <property type="match status" value="1"/>
</dbReference>
<dbReference type="InterPro" id="IPR013785">
    <property type="entry name" value="Aldolase_TIM"/>
</dbReference>
<dbReference type="InterPro" id="IPR014732">
    <property type="entry name" value="OMPdecase"/>
</dbReference>
<dbReference type="InterPro" id="IPR018089">
    <property type="entry name" value="OMPdecase_AS"/>
</dbReference>
<dbReference type="InterPro" id="IPR047596">
    <property type="entry name" value="OMPdecase_bac"/>
</dbReference>
<dbReference type="InterPro" id="IPR001754">
    <property type="entry name" value="OMPdeCOase_dom"/>
</dbReference>
<dbReference type="InterPro" id="IPR011060">
    <property type="entry name" value="RibuloseP-bd_barrel"/>
</dbReference>
<dbReference type="NCBIfam" id="NF001273">
    <property type="entry name" value="PRK00230.1"/>
    <property type="match status" value="1"/>
</dbReference>
<dbReference type="NCBIfam" id="TIGR01740">
    <property type="entry name" value="pyrF"/>
    <property type="match status" value="1"/>
</dbReference>
<dbReference type="PANTHER" id="PTHR32119">
    <property type="entry name" value="OROTIDINE 5'-PHOSPHATE DECARBOXYLASE"/>
    <property type="match status" value="1"/>
</dbReference>
<dbReference type="PANTHER" id="PTHR32119:SF2">
    <property type="entry name" value="OROTIDINE 5'-PHOSPHATE DECARBOXYLASE"/>
    <property type="match status" value="1"/>
</dbReference>
<dbReference type="Pfam" id="PF00215">
    <property type="entry name" value="OMPdecase"/>
    <property type="match status" value="1"/>
</dbReference>
<dbReference type="SMART" id="SM00934">
    <property type="entry name" value="OMPdecase"/>
    <property type="match status" value="1"/>
</dbReference>
<dbReference type="SUPFAM" id="SSF51366">
    <property type="entry name" value="Ribulose-phoshate binding barrel"/>
    <property type="match status" value="1"/>
</dbReference>
<dbReference type="PROSITE" id="PS00156">
    <property type="entry name" value="OMPDECASE"/>
    <property type="match status" value="1"/>
</dbReference>
<keyword id="KW-0210">Decarboxylase</keyword>
<keyword id="KW-0456">Lyase</keyword>
<keyword id="KW-0665">Pyrimidine biosynthesis</keyword>
<keyword id="KW-1185">Reference proteome</keyword>
<reference key="1">
    <citation type="journal article" date="2002" name="Nucleic Acids Res.">
        <title>The complete genomic sequence of Mycoplasma penetrans, an intracellular bacterial pathogen in humans.</title>
        <authorList>
            <person name="Sasaki Y."/>
            <person name="Ishikawa J."/>
            <person name="Yamashita A."/>
            <person name="Oshima K."/>
            <person name="Kenri T."/>
            <person name="Furuya K."/>
            <person name="Yoshino C."/>
            <person name="Horino A."/>
            <person name="Shiba T."/>
            <person name="Sasaki T."/>
            <person name="Hattori M."/>
        </authorList>
    </citation>
    <scope>NUCLEOTIDE SEQUENCE [LARGE SCALE GENOMIC DNA]</scope>
    <source>
        <strain>HF-2</strain>
    </source>
</reference>
<gene>
    <name evidence="1" type="primary">pyrF</name>
    <name type="ordered locus">MYPE7850</name>
</gene>